<reference key="1">
    <citation type="journal article" date="2001" name="Proc. Natl. Acad. Sci. U.S.A.">
        <title>Analysis of the chromosome sequence of the legume symbiont Sinorhizobium meliloti strain 1021.</title>
        <authorList>
            <person name="Capela D."/>
            <person name="Barloy-Hubler F."/>
            <person name="Gouzy J."/>
            <person name="Bothe G."/>
            <person name="Ampe F."/>
            <person name="Batut J."/>
            <person name="Boistard P."/>
            <person name="Becker A."/>
            <person name="Boutry M."/>
            <person name="Cadieu E."/>
            <person name="Dreano S."/>
            <person name="Gloux S."/>
            <person name="Godrie T."/>
            <person name="Goffeau A."/>
            <person name="Kahn D."/>
            <person name="Kiss E."/>
            <person name="Lelaure V."/>
            <person name="Masuy D."/>
            <person name="Pohl T."/>
            <person name="Portetelle D."/>
            <person name="Puehler A."/>
            <person name="Purnelle B."/>
            <person name="Ramsperger U."/>
            <person name="Renard C."/>
            <person name="Thebault P."/>
            <person name="Vandenbol M."/>
            <person name="Weidner S."/>
            <person name="Galibert F."/>
        </authorList>
    </citation>
    <scope>NUCLEOTIDE SEQUENCE [LARGE SCALE GENOMIC DNA]</scope>
    <source>
        <strain>1021</strain>
    </source>
</reference>
<reference key="2">
    <citation type="journal article" date="2001" name="Science">
        <title>The composite genome of the legume symbiont Sinorhizobium meliloti.</title>
        <authorList>
            <person name="Galibert F."/>
            <person name="Finan T.M."/>
            <person name="Long S.R."/>
            <person name="Puehler A."/>
            <person name="Abola P."/>
            <person name="Ampe F."/>
            <person name="Barloy-Hubler F."/>
            <person name="Barnett M.J."/>
            <person name="Becker A."/>
            <person name="Boistard P."/>
            <person name="Bothe G."/>
            <person name="Boutry M."/>
            <person name="Bowser L."/>
            <person name="Buhrmester J."/>
            <person name="Cadieu E."/>
            <person name="Capela D."/>
            <person name="Chain P."/>
            <person name="Cowie A."/>
            <person name="Davis R.W."/>
            <person name="Dreano S."/>
            <person name="Federspiel N.A."/>
            <person name="Fisher R.F."/>
            <person name="Gloux S."/>
            <person name="Godrie T."/>
            <person name="Goffeau A."/>
            <person name="Golding B."/>
            <person name="Gouzy J."/>
            <person name="Gurjal M."/>
            <person name="Hernandez-Lucas I."/>
            <person name="Hong A."/>
            <person name="Huizar L."/>
            <person name="Hyman R.W."/>
            <person name="Jones T."/>
            <person name="Kahn D."/>
            <person name="Kahn M.L."/>
            <person name="Kalman S."/>
            <person name="Keating D.H."/>
            <person name="Kiss E."/>
            <person name="Komp C."/>
            <person name="Lelaure V."/>
            <person name="Masuy D."/>
            <person name="Palm C."/>
            <person name="Peck M.C."/>
            <person name="Pohl T.M."/>
            <person name="Portetelle D."/>
            <person name="Purnelle B."/>
            <person name="Ramsperger U."/>
            <person name="Surzycki R."/>
            <person name="Thebault P."/>
            <person name="Vandenbol M."/>
            <person name="Vorhoelter F.J."/>
            <person name="Weidner S."/>
            <person name="Wells D.H."/>
            <person name="Wong K."/>
            <person name="Yeh K.-C."/>
            <person name="Batut J."/>
        </authorList>
    </citation>
    <scope>NUCLEOTIDE SEQUENCE [LARGE SCALE GENOMIC DNA]</scope>
    <source>
        <strain>1021</strain>
    </source>
</reference>
<feature type="chain" id="PRO_0000105023" description="Integration host factor subunit alpha">
    <location>
        <begin position="1"/>
        <end position="112"/>
    </location>
</feature>
<protein>
    <recommendedName>
        <fullName evidence="1">Integration host factor subunit alpha</fullName>
        <shortName evidence="1">IHF-alpha</shortName>
    </recommendedName>
</protein>
<sequence>MSGKTVTRADLAESVFRKVGLSRTESAELVETVIDEICNAIVRGESVKLSSFATFQVRDKNERIGRNPKTGEEVPISPRRVMTFKASNVLKQRVLKAHLSRKSKLKPSNPAG</sequence>
<comment type="function">
    <text evidence="1">This protein is one of the two subunits of integration host factor, a specific DNA-binding protein that functions in genetic recombination as well as in transcriptional and translational control.</text>
</comment>
<comment type="subunit">
    <text evidence="1">Heterodimer of an alpha and a beta chain.</text>
</comment>
<comment type="similarity">
    <text evidence="1">Belongs to the bacterial histone-like protein family.</text>
</comment>
<name>IHFA_RHIME</name>
<gene>
    <name evidence="1" type="primary">ihfA</name>
    <name evidence="1" type="synonym">himA</name>
    <name type="ordered locus">R01224</name>
    <name type="ORF">SMc01786</name>
</gene>
<evidence type="ECO:0000255" key="1">
    <source>
        <dbReference type="HAMAP-Rule" id="MF_00380"/>
    </source>
</evidence>
<dbReference type="EMBL" id="AL591688">
    <property type="protein sequence ID" value="CAC45803.1"/>
    <property type="molecule type" value="Genomic_DNA"/>
</dbReference>
<dbReference type="RefSeq" id="NP_385330.1">
    <property type="nucleotide sequence ID" value="NC_003047.1"/>
</dbReference>
<dbReference type="RefSeq" id="WP_003529278.1">
    <property type="nucleotide sequence ID" value="NC_003047.1"/>
</dbReference>
<dbReference type="SMR" id="Q92QT3"/>
<dbReference type="EnsemblBacteria" id="CAC45803">
    <property type="protein sequence ID" value="CAC45803"/>
    <property type="gene ID" value="SMc01786"/>
</dbReference>
<dbReference type="KEGG" id="sme:SMc01786"/>
<dbReference type="PATRIC" id="fig|266834.11.peg.2636"/>
<dbReference type="eggNOG" id="COG0776">
    <property type="taxonomic scope" value="Bacteria"/>
</dbReference>
<dbReference type="HOGENOM" id="CLU_105066_1_1_5"/>
<dbReference type="OrthoDB" id="9797747at2"/>
<dbReference type="Proteomes" id="UP000001976">
    <property type="component" value="Chromosome"/>
</dbReference>
<dbReference type="GO" id="GO:0005829">
    <property type="term" value="C:cytosol"/>
    <property type="evidence" value="ECO:0007669"/>
    <property type="project" value="TreeGrafter"/>
</dbReference>
<dbReference type="GO" id="GO:0003677">
    <property type="term" value="F:DNA binding"/>
    <property type="evidence" value="ECO:0007669"/>
    <property type="project" value="UniProtKB-UniRule"/>
</dbReference>
<dbReference type="GO" id="GO:0030527">
    <property type="term" value="F:structural constituent of chromatin"/>
    <property type="evidence" value="ECO:0007669"/>
    <property type="project" value="InterPro"/>
</dbReference>
<dbReference type="GO" id="GO:0006310">
    <property type="term" value="P:DNA recombination"/>
    <property type="evidence" value="ECO:0007669"/>
    <property type="project" value="UniProtKB-UniRule"/>
</dbReference>
<dbReference type="GO" id="GO:0009893">
    <property type="term" value="P:positive regulation of metabolic process"/>
    <property type="evidence" value="ECO:0007669"/>
    <property type="project" value="UniProtKB-ARBA"/>
</dbReference>
<dbReference type="GO" id="GO:0006355">
    <property type="term" value="P:regulation of DNA-templated transcription"/>
    <property type="evidence" value="ECO:0007669"/>
    <property type="project" value="UniProtKB-UniRule"/>
</dbReference>
<dbReference type="GO" id="GO:0006417">
    <property type="term" value="P:regulation of translation"/>
    <property type="evidence" value="ECO:0007669"/>
    <property type="project" value="UniProtKB-UniRule"/>
</dbReference>
<dbReference type="CDD" id="cd13835">
    <property type="entry name" value="IHF_A"/>
    <property type="match status" value="1"/>
</dbReference>
<dbReference type="Gene3D" id="4.10.520.10">
    <property type="entry name" value="IHF-like DNA-binding proteins"/>
    <property type="match status" value="1"/>
</dbReference>
<dbReference type="HAMAP" id="MF_00380">
    <property type="entry name" value="IHF_alpha"/>
    <property type="match status" value="1"/>
</dbReference>
<dbReference type="InterPro" id="IPR000119">
    <property type="entry name" value="Hist_DNA-bd"/>
</dbReference>
<dbReference type="InterPro" id="IPR020816">
    <property type="entry name" value="Histone-like_DNA-bd_CS"/>
</dbReference>
<dbReference type="InterPro" id="IPR010992">
    <property type="entry name" value="IHF-like_DNA-bd_dom_sf"/>
</dbReference>
<dbReference type="InterPro" id="IPR005684">
    <property type="entry name" value="IHF_alpha"/>
</dbReference>
<dbReference type="NCBIfam" id="TIGR00987">
    <property type="entry name" value="himA"/>
    <property type="match status" value="1"/>
</dbReference>
<dbReference type="NCBIfam" id="NF001401">
    <property type="entry name" value="PRK00285.1"/>
    <property type="match status" value="1"/>
</dbReference>
<dbReference type="PANTHER" id="PTHR33175">
    <property type="entry name" value="DNA-BINDING PROTEIN HU"/>
    <property type="match status" value="1"/>
</dbReference>
<dbReference type="PANTHER" id="PTHR33175:SF2">
    <property type="entry name" value="INTEGRATION HOST FACTOR SUBUNIT ALPHA"/>
    <property type="match status" value="1"/>
</dbReference>
<dbReference type="Pfam" id="PF00216">
    <property type="entry name" value="Bac_DNA_binding"/>
    <property type="match status" value="1"/>
</dbReference>
<dbReference type="PRINTS" id="PR01727">
    <property type="entry name" value="DNABINDINGHU"/>
</dbReference>
<dbReference type="SMART" id="SM00411">
    <property type="entry name" value="BHL"/>
    <property type="match status" value="1"/>
</dbReference>
<dbReference type="SUPFAM" id="SSF47729">
    <property type="entry name" value="IHF-like DNA-binding proteins"/>
    <property type="match status" value="1"/>
</dbReference>
<dbReference type="PROSITE" id="PS00045">
    <property type="entry name" value="HISTONE_LIKE"/>
    <property type="match status" value="1"/>
</dbReference>
<proteinExistence type="inferred from homology"/>
<organism>
    <name type="scientific">Rhizobium meliloti (strain 1021)</name>
    <name type="common">Ensifer meliloti</name>
    <name type="synonym">Sinorhizobium meliloti</name>
    <dbReference type="NCBI Taxonomy" id="266834"/>
    <lineage>
        <taxon>Bacteria</taxon>
        <taxon>Pseudomonadati</taxon>
        <taxon>Pseudomonadota</taxon>
        <taxon>Alphaproteobacteria</taxon>
        <taxon>Hyphomicrobiales</taxon>
        <taxon>Rhizobiaceae</taxon>
        <taxon>Sinorhizobium/Ensifer group</taxon>
        <taxon>Sinorhizobium</taxon>
    </lineage>
</organism>
<accession>Q92QT3</accession>
<keyword id="KW-0233">DNA recombination</keyword>
<keyword id="KW-0238">DNA-binding</keyword>
<keyword id="KW-1185">Reference proteome</keyword>
<keyword id="KW-0804">Transcription</keyword>
<keyword id="KW-0805">Transcription regulation</keyword>
<keyword id="KW-0810">Translation regulation</keyword>